<feature type="chain" id="PRO_1000005912" description="DNA-directed RNA polymerase subunit omega">
    <location>
        <begin position="1"/>
        <end position="72"/>
    </location>
</feature>
<sequence length="72" mass="8013">MSNSMINPSIVNLLEKVDDRYSLVTITSKRSRQLIDGAKPLVDIDSTKPVTVAINEIHEGKITYKTVKEGIK</sequence>
<accession>A5I4U1</accession>
<accession>A7G5Z6</accession>
<keyword id="KW-0240">DNA-directed RNA polymerase</keyword>
<keyword id="KW-0548">Nucleotidyltransferase</keyword>
<keyword id="KW-1185">Reference proteome</keyword>
<keyword id="KW-0804">Transcription</keyword>
<keyword id="KW-0808">Transferase</keyword>
<evidence type="ECO:0000255" key="1">
    <source>
        <dbReference type="HAMAP-Rule" id="MF_00366"/>
    </source>
</evidence>
<organism>
    <name type="scientific">Clostridium botulinum (strain Hall / ATCC 3502 / NCTC 13319 / Type A)</name>
    <dbReference type="NCBI Taxonomy" id="441771"/>
    <lineage>
        <taxon>Bacteria</taxon>
        <taxon>Bacillati</taxon>
        <taxon>Bacillota</taxon>
        <taxon>Clostridia</taxon>
        <taxon>Eubacteriales</taxon>
        <taxon>Clostridiaceae</taxon>
        <taxon>Clostridium</taxon>
    </lineage>
</organism>
<reference key="1">
    <citation type="journal article" date="2007" name="Genome Res.">
        <title>Genome sequence of a proteolytic (Group I) Clostridium botulinum strain Hall A and comparative analysis of the clostridial genomes.</title>
        <authorList>
            <person name="Sebaihia M."/>
            <person name="Peck M.W."/>
            <person name="Minton N.P."/>
            <person name="Thomson N.R."/>
            <person name="Holden M.T.G."/>
            <person name="Mitchell W.J."/>
            <person name="Carter A.T."/>
            <person name="Bentley S.D."/>
            <person name="Mason D.R."/>
            <person name="Crossman L."/>
            <person name="Paul C.J."/>
            <person name="Ivens A."/>
            <person name="Wells-Bennik M.H.J."/>
            <person name="Davis I.J."/>
            <person name="Cerdeno-Tarraga A.M."/>
            <person name="Churcher C."/>
            <person name="Quail M.A."/>
            <person name="Chillingworth T."/>
            <person name="Feltwell T."/>
            <person name="Fraser A."/>
            <person name="Goodhead I."/>
            <person name="Hance Z."/>
            <person name="Jagels K."/>
            <person name="Larke N."/>
            <person name="Maddison M."/>
            <person name="Moule S."/>
            <person name="Mungall K."/>
            <person name="Norbertczak H."/>
            <person name="Rabbinowitsch E."/>
            <person name="Sanders M."/>
            <person name="Simmonds M."/>
            <person name="White B."/>
            <person name="Whithead S."/>
            <person name="Parkhill J."/>
        </authorList>
    </citation>
    <scope>NUCLEOTIDE SEQUENCE [LARGE SCALE GENOMIC DNA]</scope>
    <source>
        <strain>Hall / ATCC 3502 / NCTC 13319 / Type A</strain>
    </source>
</reference>
<reference key="2">
    <citation type="journal article" date="2007" name="PLoS ONE">
        <title>Analysis of the neurotoxin complex genes in Clostridium botulinum A1-A4 and B1 strains: BoNT/A3, /Ba4 and /B1 clusters are located within plasmids.</title>
        <authorList>
            <person name="Smith T.J."/>
            <person name="Hill K.K."/>
            <person name="Foley B.T."/>
            <person name="Detter J.C."/>
            <person name="Munk A.C."/>
            <person name="Bruce D.C."/>
            <person name="Doggett N.A."/>
            <person name="Smith L.A."/>
            <person name="Marks J.D."/>
            <person name="Xie G."/>
            <person name="Brettin T.S."/>
        </authorList>
    </citation>
    <scope>NUCLEOTIDE SEQUENCE [LARGE SCALE GENOMIC DNA]</scope>
    <source>
        <strain>Hall / ATCC 3502 / NCTC 13319 / Type A</strain>
    </source>
</reference>
<dbReference type="EC" id="2.7.7.6" evidence="1"/>
<dbReference type="EMBL" id="CP000727">
    <property type="protein sequence ID" value="ABS36112.1"/>
    <property type="molecule type" value="Genomic_DNA"/>
</dbReference>
<dbReference type="EMBL" id="AM412317">
    <property type="protein sequence ID" value="CAL84064.1"/>
    <property type="molecule type" value="Genomic_DNA"/>
</dbReference>
<dbReference type="RefSeq" id="WP_003388622.1">
    <property type="nucleotide sequence ID" value="NC_009698.1"/>
</dbReference>
<dbReference type="RefSeq" id="YP_001255008.1">
    <property type="nucleotide sequence ID" value="NC_009495.1"/>
</dbReference>
<dbReference type="RefSeq" id="YP_001388211.1">
    <property type="nucleotide sequence ID" value="NC_009698.1"/>
</dbReference>
<dbReference type="SMR" id="A5I4U1"/>
<dbReference type="GeneID" id="92939254"/>
<dbReference type="KEGG" id="cbh:CLC_2368"/>
<dbReference type="KEGG" id="cbo:CBO2512A"/>
<dbReference type="PATRIC" id="fig|413999.7.peg.2491"/>
<dbReference type="HOGENOM" id="CLU_125406_6_1_9"/>
<dbReference type="PRO" id="PR:A5I4U1"/>
<dbReference type="Proteomes" id="UP000001986">
    <property type="component" value="Chromosome"/>
</dbReference>
<dbReference type="GO" id="GO:0000345">
    <property type="term" value="C:cytosolic DNA-directed RNA polymerase complex"/>
    <property type="evidence" value="ECO:0000318"/>
    <property type="project" value="GO_Central"/>
</dbReference>
<dbReference type="GO" id="GO:0001000">
    <property type="term" value="F:bacterial-type RNA polymerase core enzyme binding"/>
    <property type="evidence" value="ECO:0000318"/>
    <property type="project" value="GO_Central"/>
</dbReference>
<dbReference type="GO" id="GO:0003677">
    <property type="term" value="F:DNA binding"/>
    <property type="evidence" value="ECO:0007669"/>
    <property type="project" value="UniProtKB-UniRule"/>
</dbReference>
<dbReference type="GO" id="GO:0003899">
    <property type="term" value="F:DNA-directed RNA polymerase activity"/>
    <property type="evidence" value="ECO:0007669"/>
    <property type="project" value="UniProtKB-UniRule"/>
</dbReference>
<dbReference type="GO" id="GO:0006352">
    <property type="term" value="P:DNA-templated transcription initiation"/>
    <property type="evidence" value="ECO:0000318"/>
    <property type="project" value="GO_Central"/>
</dbReference>
<dbReference type="Gene3D" id="3.90.940.10">
    <property type="match status" value="1"/>
</dbReference>
<dbReference type="HAMAP" id="MF_00366">
    <property type="entry name" value="RNApol_bact_RpoZ"/>
    <property type="match status" value="1"/>
</dbReference>
<dbReference type="InterPro" id="IPR003716">
    <property type="entry name" value="DNA-dir_RNA_pol_omega"/>
</dbReference>
<dbReference type="InterPro" id="IPR006110">
    <property type="entry name" value="Pol_omega/Rpo6/RPB6"/>
</dbReference>
<dbReference type="InterPro" id="IPR036161">
    <property type="entry name" value="RPB6/omega-like_sf"/>
</dbReference>
<dbReference type="NCBIfam" id="TIGR00690">
    <property type="entry name" value="rpoZ"/>
    <property type="match status" value="1"/>
</dbReference>
<dbReference type="PANTHER" id="PTHR34476">
    <property type="entry name" value="DNA-DIRECTED RNA POLYMERASE SUBUNIT OMEGA"/>
    <property type="match status" value="1"/>
</dbReference>
<dbReference type="PANTHER" id="PTHR34476:SF1">
    <property type="entry name" value="DNA-DIRECTED RNA POLYMERASE SUBUNIT OMEGA"/>
    <property type="match status" value="1"/>
</dbReference>
<dbReference type="Pfam" id="PF01192">
    <property type="entry name" value="RNA_pol_Rpb6"/>
    <property type="match status" value="1"/>
</dbReference>
<dbReference type="SMART" id="SM01409">
    <property type="entry name" value="RNA_pol_Rpb6"/>
    <property type="match status" value="1"/>
</dbReference>
<dbReference type="SUPFAM" id="SSF63562">
    <property type="entry name" value="RPB6/omega subunit-like"/>
    <property type="match status" value="1"/>
</dbReference>
<gene>
    <name evidence="1" type="primary">rpoZ</name>
    <name type="ordered locus">CBO2512.1</name>
    <name type="ordered locus">CLC_2368</name>
    <name type="ORF">CBO2512A</name>
</gene>
<name>RPOZ_CLOBH</name>
<protein>
    <recommendedName>
        <fullName evidence="1">DNA-directed RNA polymerase subunit omega</fullName>
        <shortName evidence="1">RNAP omega subunit</shortName>
        <ecNumber evidence="1">2.7.7.6</ecNumber>
    </recommendedName>
    <alternativeName>
        <fullName evidence="1">RNA polymerase omega subunit</fullName>
    </alternativeName>
    <alternativeName>
        <fullName evidence="1">Transcriptase subunit omega</fullName>
    </alternativeName>
</protein>
<comment type="function">
    <text evidence="1">Promotes RNA polymerase assembly. Latches the N- and C-terminal regions of the beta' subunit thereby facilitating its interaction with the beta and alpha subunits.</text>
</comment>
<comment type="catalytic activity">
    <reaction evidence="1">
        <text>RNA(n) + a ribonucleoside 5'-triphosphate = RNA(n+1) + diphosphate</text>
        <dbReference type="Rhea" id="RHEA:21248"/>
        <dbReference type="Rhea" id="RHEA-COMP:14527"/>
        <dbReference type="Rhea" id="RHEA-COMP:17342"/>
        <dbReference type="ChEBI" id="CHEBI:33019"/>
        <dbReference type="ChEBI" id="CHEBI:61557"/>
        <dbReference type="ChEBI" id="CHEBI:140395"/>
        <dbReference type="EC" id="2.7.7.6"/>
    </reaction>
</comment>
<comment type="subunit">
    <text evidence="1">The RNAP catalytic core consists of 2 alpha, 1 beta, 1 beta' and 1 omega subunit. When a sigma factor is associated with the core the holoenzyme is formed, which can initiate transcription.</text>
</comment>
<comment type="similarity">
    <text evidence="1">Belongs to the RNA polymerase subunit omega family.</text>
</comment>
<proteinExistence type="inferred from homology"/>